<name>DCUP_RAT</name>
<evidence type="ECO:0000250" key="1">
    <source>
        <dbReference type="UniProtKB" id="P06132"/>
    </source>
</evidence>
<evidence type="ECO:0000250" key="2">
    <source>
        <dbReference type="UniProtKB" id="P70697"/>
    </source>
</evidence>
<evidence type="ECO:0000305" key="3"/>
<evidence type="ECO:0000312" key="4">
    <source>
        <dbReference type="RGD" id="3946"/>
    </source>
</evidence>
<organism>
    <name type="scientific">Rattus norvegicus</name>
    <name type="common">Rat</name>
    <dbReference type="NCBI Taxonomy" id="10116"/>
    <lineage>
        <taxon>Eukaryota</taxon>
        <taxon>Metazoa</taxon>
        <taxon>Chordata</taxon>
        <taxon>Craniata</taxon>
        <taxon>Vertebrata</taxon>
        <taxon>Euteleostomi</taxon>
        <taxon>Mammalia</taxon>
        <taxon>Eutheria</taxon>
        <taxon>Euarchontoglires</taxon>
        <taxon>Glires</taxon>
        <taxon>Rodentia</taxon>
        <taxon>Myomorpha</taxon>
        <taxon>Muroidea</taxon>
        <taxon>Muridae</taxon>
        <taxon>Murinae</taxon>
        <taxon>Rattus</taxon>
    </lineage>
</organism>
<comment type="function">
    <text evidence="1">Catalyzes the sequential decarboxylation of the four acetate side chains of uroporphyrinogen to form coproporphyrinogen and participates in the fifth step in the heme biosynthetic pathway. Isomer I or isomer III of uroporphyrinogen may serve as substrate, but only coproporphyrinogen III can ultimately be converted to heme. In vitro also decarboxylates pentacarboxylate porphyrinogen I.</text>
</comment>
<comment type="catalytic activity">
    <reaction evidence="1">
        <text>uroporphyrinogen III + 4 H(+) = coproporphyrinogen III + 4 CO2</text>
        <dbReference type="Rhea" id="RHEA:19865"/>
        <dbReference type="ChEBI" id="CHEBI:15378"/>
        <dbReference type="ChEBI" id="CHEBI:16526"/>
        <dbReference type="ChEBI" id="CHEBI:57308"/>
        <dbReference type="ChEBI" id="CHEBI:57309"/>
        <dbReference type="EC" id="4.1.1.37"/>
    </reaction>
    <physiologicalReaction direction="left-to-right" evidence="1">
        <dbReference type="Rhea" id="RHEA:19866"/>
    </physiologicalReaction>
</comment>
<comment type="catalytic activity">
    <reaction evidence="1">
        <text>uroporphyrinogen I + 4 H(+) = coproporphyrinogen I + 4 CO2</text>
        <dbReference type="Rhea" id="RHEA:31239"/>
        <dbReference type="ChEBI" id="CHEBI:15378"/>
        <dbReference type="ChEBI" id="CHEBI:16526"/>
        <dbReference type="ChEBI" id="CHEBI:62626"/>
        <dbReference type="ChEBI" id="CHEBI:62631"/>
    </reaction>
    <physiologicalReaction direction="left-to-right" evidence="1">
        <dbReference type="Rhea" id="RHEA:31240"/>
    </physiologicalReaction>
</comment>
<comment type="pathway">
    <text evidence="1">Porphyrin-containing compound metabolism; protoporphyrin-IX biosynthesis; coproporphyrinogen-III from 5-aminolevulinate: step 4/4.</text>
</comment>
<comment type="subunit">
    <text evidence="1">Homodimer.</text>
</comment>
<comment type="subcellular location">
    <subcellularLocation>
        <location evidence="2">Cytoplasm</location>
        <location evidence="2">Cytosol</location>
    </subcellularLocation>
</comment>
<comment type="similarity">
    <text evidence="3">Belongs to the uroporphyrinogen decarboxylase family.</text>
</comment>
<sequence length="364" mass="40453">NGLGLQNFPELKNDTFLRAAWGEETDYTPVWCMRQAGRYLPEFRETRAAQDFFSTCRSPEACCELTLEPVRRFPLDAAIIFSDILVVPQALAMEVTMVPGKGPSFPEPLREERDLERLRDPAAVASELGYVFQAITLTRQQLAGRVPLIGFAGAPWTLMTYMVEGGSFKTMAQAKRWLYQKPVASHKLLGILTHALVPYLIGQVAAGAQALQLFESHAGHLGSELFSKFALPYIRDVAKRVKAGLQKAGLTRMPMIIFAKDGHFALEELAQAGYEVVGLDWTVAPKKAREPVGKTVTLQGELDPCALYASEEEIGRLVQQMLNDFGPQRYIANLGHGLYPDMDPEHVGAFLDAVHKHSRLLRQN</sequence>
<keyword id="KW-0963">Cytoplasm</keyword>
<keyword id="KW-0210">Decarboxylase</keyword>
<keyword id="KW-0903">Direct protein sequencing</keyword>
<keyword id="KW-0350">Heme biosynthesis</keyword>
<keyword id="KW-0456">Lyase</keyword>
<keyword id="KW-0627">Porphyrin biosynthesis</keyword>
<keyword id="KW-1185">Reference proteome</keyword>
<gene>
    <name evidence="4" type="primary">Urod</name>
</gene>
<proteinExistence type="evidence at protein level"/>
<reference key="1">
    <citation type="journal article" date="1987" name="Nucleic Acids Res.">
        <title>Rat uroporphyrinogen decarboxylase cDNA: nucleotide sequence and comparison to human uroporphyrinogen decarboxylase.</title>
        <authorList>
            <person name="Romana M."/>
            <person name="le Boulch P."/>
            <person name="Romeo P.-H."/>
        </authorList>
    </citation>
    <scope>NUCLEOTIDE SEQUENCE [MRNA]</scope>
</reference>
<reference key="2">
    <citation type="submission" date="2007-04" db="UniProtKB">
        <authorList>
            <person name="Lubec G."/>
            <person name="Diao W."/>
        </authorList>
    </citation>
    <scope>PROTEIN SEQUENCE OF 118-139</scope>
    <scope>IDENTIFICATION BY MASS SPECTROMETRY</scope>
    <source>
        <strain>Sprague-Dawley</strain>
        <tissue>Hippocampus</tissue>
    </source>
</reference>
<accession>P32362</accession>
<protein>
    <recommendedName>
        <fullName evidence="3">Uroporphyrinogen decarboxylase</fullName>
        <shortName>UPD</shortName>
        <shortName>URO-D</shortName>
        <ecNumber evidence="1">4.1.1.37</ecNumber>
    </recommendedName>
</protein>
<feature type="chain" id="PRO_0000187571" description="Uroporphyrinogen decarboxylase">
    <location>
        <begin position="1" status="less than"/>
        <end position="364"/>
    </location>
</feature>
<feature type="binding site" evidence="1">
    <location>
        <position position="34"/>
    </location>
    <ligand>
        <name>coproporphyrinogen I</name>
        <dbReference type="ChEBI" id="CHEBI:62631"/>
    </ligand>
</feature>
<feature type="binding site" evidence="1">
    <location>
        <position position="34"/>
    </location>
    <ligand>
        <name>coproporphyrinogen III</name>
        <dbReference type="ChEBI" id="CHEBI:57309"/>
    </ligand>
</feature>
<feature type="binding site" evidence="1">
    <location>
        <position position="36"/>
    </location>
    <ligand>
        <name>coproporphyrinogen I</name>
        <dbReference type="ChEBI" id="CHEBI:62631"/>
    </ligand>
</feature>
<feature type="binding site" evidence="1">
    <location>
        <position position="36"/>
    </location>
    <ligand>
        <name>coproporphyrinogen III</name>
        <dbReference type="ChEBI" id="CHEBI:57309"/>
    </ligand>
</feature>
<feature type="binding site" evidence="1">
    <location>
        <position position="38"/>
    </location>
    <ligand>
        <name>coproporphyrinogen I</name>
        <dbReference type="ChEBI" id="CHEBI:62631"/>
    </ligand>
</feature>
<feature type="binding site" evidence="1">
    <location>
        <position position="38"/>
    </location>
    <ligand>
        <name>coproporphyrinogen III</name>
        <dbReference type="ChEBI" id="CHEBI:57309"/>
    </ligand>
</feature>
<feature type="binding site" evidence="1">
    <location>
        <position position="47"/>
    </location>
    <ligand>
        <name>coproporphyrinogen I</name>
        <dbReference type="ChEBI" id="CHEBI:62631"/>
    </ligand>
</feature>
<feature type="binding site" evidence="1">
    <location>
        <position position="83"/>
    </location>
    <ligand>
        <name>coproporphyrinogen I</name>
        <dbReference type="ChEBI" id="CHEBI:62631"/>
    </ligand>
</feature>
<feature type="binding site" evidence="1">
    <location>
        <position position="83"/>
    </location>
    <ligand>
        <name>coproporphyrinogen III</name>
        <dbReference type="ChEBI" id="CHEBI:57309"/>
    </ligand>
</feature>
<feature type="binding site" evidence="1">
    <location>
        <position position="161"/>
    </location>
    <ligand>
        <name>coproporphyrinogen I</name>
        <dbReference type="ChEBI" id="CHEBI:62631"/>
    </ligand>
</feature>
<feature type="binding site" evidence="1">
    <location>
        <position position="161"/>
    </location>
    <ligand>
        <name>coproporphyrinogen III</name>
        <dbReference type="ChEBI" id="CHEBI:57309"/>
    </ligand>
</feature>
<feature type="binding site" evidence="1">
    <location>
        <position position="216"/>
    </location>
    <ligand>
        <name>coproporphyrinogen I</name>
        <dbReference type="ChEBI" id="CHEBI:62631"/>
    </ligand>
</feature>
<feature type="binding site" evidence="1">
    <location>
        <position position="216"/>
    </location>
    <ligand>
        <name>coproporphyrinogen III</name>
        <dbReference type="ChEBI" id="CHEBI:57309"/>
    </ligand>
</feature>
<feature type="binding site" evidence="1">
    <location>
        <position position="336"/>
    </location>
    <ligand>
        <name>coproporphyrinogen I</name>
        <dbReference type="ChEBI" id="CHEBI:62631"/>
    </ligand>
</feature>
<feature type="binding site" evidence="1">
    <location>
        <position position="336"/>
    </location>
    <ligand>
        <name>coproporphyrinogen III</name>
        <dbReference type="ChEBI" id="CHEBI:57309"/>
    </ligand>
</feature>
<feature type="site" description="Transition state stabilizer" evidence="1">
    <location>
        <position position="83"/>
    </location>
</feature>
<feature type="non-terminal residue">
    <location>
        <position position="1"/>
    </location>
</feature>
<dbReference type="EC" id="4.1.1.37" evidence="1"/>
<dbReference type="EMBL" id="Y00350">
    <property type="protein sequence ID" value="CAB50784.1"/>
    <property type="molecule type" value="mRNA"/>
</dbReference>
<dbReference type="SMR" id="P32362"/>
<dbReference type="FunCoup" id="P32362">
    <property type="interactions" value="1677"/>
</dbReference>
<dbReference type="STRING" id="10116.ENSRNOP00000024719"/>
<dbReference type="PhosphoSitePlus" id="P32362"/>
<dbReference type="jPOST" id="P32362"/>
<dbReference type="PaxDb" id="10116-ENSRNOP00000024719"/>
<dbReference type="UCSC" id="RGD:3946">
    <property type="organism name" value="rat"/>
</dbReference>
<dbReference type="AGR" id="RGD:3946"/>
<dbReference type="RGD" id="3946">
    <property type="gene designation" value="Urod"/>
</dbReference>
<dbReference type="eggNOG" id="KOG2872">
    <property type="taxonomic scope" value="Eukaryota"/>
</dbReference>
<dbReference type="InParanoid" id="P32362"/>
<dbReference type="PhylomeDB" id="P32362"/>
<dbReference type="Reactome" id="R-RNO-189451">
    <property type="pathway name" value="Heme biosynthesis"/>
</dbReference>
<dbReference type="UniPathway" id="UPA00251">
    <property type="reaction ID" value="UER00321"/>
</dbReference>
<dbReference type="Proteomes" id="UP000002494">
    <property type="component" value="Unplaced"/>
</dbReference>
<dbReference type="GO" id="GO:0005829">
    <property type="term" value="C:cytosol"/>
    <property type="evidence" value="ECO:0000266"/>
    <property type="project" value="RGD"/>
</dbReference>
<dbReference type="GO" id="GO:0008198">
    <property type="term" value="F:ferrous iron binding"/>
    <property type="evidence" value="ECO:0000314"/>
    <property type="project" value="RGD"/>
</dbReference>
<dbReference type="GO" id="GO:0004853">
    <property type="term" value="F:uroporphyrinogen decarboxylase activity"/>
    <property type="evidence" value="ECO:0000314"/>
    <property type="project" value="RGD"/>
</dbReference>
<dbReference type="GO" id="GO:0071243">
    <property type="term" value="P:cellular response to arsenic-containing substance"/>
    <property type="evidence" value="ECO:0000270"/>
    <property type="project" value="RGD"/>
</dbReference>
<dbReference type="GO" id="GO:0006784">
    <property type="term" value="P:heme A biosynthetic process"/>
    <property type="evidence" value="ECO:0000266"/>
    <property type="project" value="RGD"/>
</dbReference>
<dbReference type="GO" id="GO:0006785">
    <property type="term" value="P:heme B biosynthetic process"/>
    <property type="evidence" value="ECO:0000266"/>
    <property type="project" value="RGD"/>
</dbReference>
<dbReference type="GO" id="GO:0006783">
    <property type="term" value="P:heme biosynthetic process"/>
    <property type="evidence" value="ECO:0000266"/>
    <property type="project" value="RGD"/>
</dbReference>
<dbReference type="GO" id="GO:0042168">
    <property type="term" value="P:heme metabolic process"/>
    <property type="evidence" value="ECO:0000266"/>
    <property type="project" value="RGD"/>
</dbReference>
<dbReference type="GO" id="GO:0048034">
    <property type="term" value="P:heme O biosynthetic process"/>
    <property type="evidence" value="ECO:0000266"/>
    <property type="project" value="RGD"/>
</dbReference>
<dbReference type="GO" id="GO:0001889">
    <property type="term" value="P:liver development"/>
    <property type="evidence" value="ECO:0000270"/>
    <property type="project" value="RGD"/>
</dbReference>
<dbReference type="GO" id="GO:0006779">
    <property type="term" value="P:porphyrin-containing compound biosynthetic process"/>
    <property type="evidence" value="ECO:0000314"/>
    <property type="project" value="RGD"/>
</dbReference>
<dbReference type="GO" id="GO:0006787">
    <property type="term" value="P:porphyrin-containing compound catabolic process"/>
    <property type="evidence" value="ECO:0000250"/>
    <property type="project" value="UniProtKB"/>
</dbReference>
<dbReference type="GO" id="GO:0006778">
    <property type="term" value="P:porphyrin-containing compound metabolic process"/>
    <property type="evidence" value="ECO:0000266"/>
    <property type="project" value="RGD"/>
</dbReference>
<dbReference type="GO" id="GO:0006782">
    <property type="term" value="P:protoporphyrinogen IX biosynthetic process"/>
    <property type="evidence" value="ECO:0007669"/>
    <property type="project" value="UniProtKB-UniPathway"/>
</dbReference>
<dbReference type="GO" id="GO:0014075">
    <property type="term" value="P:response to amine"/>
    <property type="evidence" value="ECO:0000270"/>
    <property type="project" value="RGD"/>
</dbReference>
<dbReference type="GO" id="GO:0032355">
    <property type="term" value="P:response to estradiol"/>
    <property type="evidence" value="ECO:0000270"/>
    <property type="project" value="RGD"/>
</dbReference>
<dbReference type="GO" id="GO:0045471">
    <property type="term" value="P:response to ethanol"/>
    <property type="evidence" value="ECO:0000270"/>
    <property type="project" value="RGD"/>
</dbReference>
<dbReference type="GO" id="GO:0060992">
    <property type="term" value="P:response to fungicide"/>
    <property type="evidence" value="ECO:0000270"/>
    <property type="project" value="RGD"/>
</dbReference>
<dbReference type="GO" id="GO:0010039">
    <property type="term" value="P:response to iron ion"/>
    <property type="evidence" value="ECO:0000270"/>
    <property type="project" value="RGD"/>
</dbReference>
<dbReference type="GO" id="GO:0046689">
    <property type="term" value="P:response to mercury ion"/>
    <property type="evidence" value="ECO:0000270"/>
    <property type="project" value="RGD"/>
</dbReference>
<dbReference type="GO" id="GO:0051597">
    <property type="term" value="P:response to methylmercury"/>
    <property type="evidence" value="ECO:0000270"/>
    <property type="project" value="RGD"/>
</dbReference>
<dbReference type="GO" id="GO:0046502">
    <property type="term" value="P:uroporphyrinogen III metabolic process"/>
    <property type="evidence" value="ECO:0000314"/>
    <property type="project" value="RGD"/>
</dbReference>
<dbReference type="CDD" id="cd00717">
    <property type="entry name" value="URO-D"/>
    <property type="match status" value="1"/>
</dbReference>
<dbReference type="FunFam" id="3.20.20.210:FF:000008">
    <property type="entry name" value="Uroporphyrinogen decarboxylase"/>
    <property type="match status" value="1"/>
</dbReference>
<dbReference type="Gene3D" id="3.20.20.210">
    <property type="match status" value="1"/>
</dbReference>
<dbReference type="HAMAP" id="MF_00218">
    <property type="entry name" value="URO_D"/>
    <property type="match status" value="1"/>
</dbReference>
<dbReference type="InterPro" id="IPR038071">
    <property type="entry name" value="UROD/MetE-like_sf"/>
</dbReference>
<dbReference type="InterPro" id="IPR006361">
    <property type="entry name" value="Uroporphyrinogen_deCO2ase_HemE"/>
</dbReference>
<dbReference type="InterPro" id="IPR000257">
    <property type="entry name" value="Uroporphyrinogen_deCOase"/>
</dbReference>
<dbReference type="NCBIfam" id="TIGR01464">
    <property type="entry name" value="hemE"/>
    <property type="match status" value="1"/>
</dbReference>
<dbReference type="PANTHER" id="PTHR21091">
    <property type="entry name" value="METHYLTETRAHYDROFOLATE:HOMOCYSTEINE METHYLTRANSFERASE RELATED"/>
    <property type="match status" value="1"/>
</dbReference>
<dbReference type="PANTHER" id="PTHR21091:SF169">
    <property type="entry name" value="UROPORPHYRINOGEN DECARBOXYLASE"/>
    <property type="match status" value="1"/>
</dbReference>
<dbReference type="Pfam" id="PF01208">
    <property type="entry name" value="URO-D"/>
    <property type="match status" value="1"/>
</dbReference>
<dbReference type="SUPFAM" id="SSF51726">
    <property type="entry name" value="UROD/MetE-like"/>
    <property type="match status" value="1"/>
</dbReference>
<dbReference type="PROSITE" id="PS00906">
    <property type="entry name" value="UROD_1"/>
    <property type="match status" value="1"/>
</dbReference>
<dbReference type="PROSITE" id="PS00907">
    <property type="entry name" value="UROD_2"/>
    <property type="match status" value="1"/>
</dbReference>